<gene>
    <name type="primary">SPR28</name>
    <name type="ordered locus">YDR218C</name>
    <name type="ORF">YD9934.03C</name>
</gene>
<evidence type="ECO:0000250" key="1"/>
<evidence type="ECO:0000255" key="2"/>
<evidence type="ECO:0000255" key="3">
    <source>
        <dbReference type="PROSITE-ProRule" id="PRU01056"/>
    </source>
</evidence>
<evidence type="ECO:0000256" key="4">
    <source>
        <dbReference type="SAM" id="MobiDB-lite"/>
    </source>
</evidence>
<evidence type="ECO:0000269" key="5">
    <source>
    </source>
</evidence>
<organism>
    <name type="scientific">Saccharomyces cerevisiae (strain ATCC 204508 / S288c)</name>
    <name type="common">Baker's yeast</name>
    <dbReference type="NCBI Taxonomy" id="559292"/>
    <lineage>
        <taxon>Eukaryota</taxon>
        <taxon>Fungi</taxon>
        <taxon>Dikarya</taxon>
        <taxon>Ascomycota</taxon>
        <taxon>Saccharomycotina</taxon>
        <taxon>Saccharomycetes</taxon>
        <taxon>Saccharomycetales</taxon>
        <taxon>Saccharomycetaceae</taxon>
        <taxon>Saccharomyces</taxon>
    </lineage>
</organism>
<comment type="function">
    <text evidence="1">Septins are GTPases involved in cytokinesis that assemble into filaments and form a ring at the cleavage site. May act by recruiting MYO1 and HOF1, a protein involved in septation, to the site of cleavage. Septins are also involved in cell morphogenesis, bud site selection, chitin deposition, cell cycle regulation, cell compartmentalization and spore wall formation (By similarity).</text>
</comment>
<comment type="subunit">
    <text evidence="5">Interacts with itself. Interacts with CDC11 and SPR3; probably to form a ring at the bud neck.</text>
</comment>
<comment type="subcellular location">
    <subcellularLocation>
        <location evidence="1">Membrane</location>
        <topology evidence="1">Peripheral membrane protein</topology>
    </subcellularLocation>
    <subcellularLocation>
        <location evidence="1">Bud neck</location>
    </subcellularLocation>
    <text evidence="1 5">Present at the bud neck during cell division. Probably interacts with phosphoinosides such as phosphatidylinositol 4-phosphate or phosphatidylinositol 5-phosphate (By similarity). Localizes to ring-like structures around each of the four nuclear lobes at the onset and during meiosis II. Concentrated initially at the leading edge of the developing prospore wall.</text>
</comment>
<comment type="developmental stage">
    <text evidence="5">Expressed during meiosis and ascospore formation. First expressed at the beginning of meiosis I, and is highly expressed prior meiosis II.</text>
</comment>
<comment type="similarity">
    <text evidence="3">Belongs to the TRAFAC class TrmE-Era-EngA-EngB-Septin-like GTPase superfamily. Septin GTPase family.</text>
</comment>
<protein>
    <recommendedName>
        <fullName>Sporulation-regulated protein 28</fullName>
    </recommendedName>
</protein>
<reference key="1">
    <citation type="journal article" date="1997" name="Nature">
        <title>The nucleotide sequence of Saccharomyces cerevisiae chromosome IV.</title>
        <authorList>
            <person name="Jacq C."/>
            <person name="Alt-Moerbe J."/>
            <person name="Andre B."/>
            <person name="Arnold W."/>
            <person name="Bahr A."/>
            <person name="Ballesta J.P.G."/>
            <person name="Bargues M."/>
            <person name="Baron L."/>
            <person name="Becker A."/>
            <person name="Biteau N."/>
            <person name="Bloecker H."/>
            <person name="Blugeon C."/>
            <person name="Boskovic J."/>
            <person name="Brandt P."/>
            <person name="Brueckner M."/>
            <person name="Buitrago M.J."/>
            <person name="Coster F."/>
            <person name="Delaveau T."/>
            <person name="del Rey F."/>
            <person name="Dujon B."/>
            <person name="Eide L.G."/>
            <person name="Garcia-Cantalejo J.M."/>
            <person name="Goffeau A."/>
            <person name="Gomez-Peris A."/>
            <person name="Granotier C."/>
            <person name="Hanemann V."/>
            <person name="Hankeln T."/>
            <person name="Hoheisel J.D."/>
            <person name="Jaeger W."/>
            <person name="Jimenez A."/>
            <person name="Jonniaux J.-L."/>
            <person name="Kraemer C."/>
            <person name="Kuester H."/>
            <person name="Laamanen P."/>
            <person name="Legros Y."/>
            <person name="Louis E.J."/>
            <person name="Moeller-Rieker S."/>
            <person name="Monnet A."/>
            <person name="Moro M."/>
            <person name="Mueller-Auer S."/>
            <person name="Nussbaumer B."/>
            <person name="Paricio N."/>
            <person name="Paulin L."/>
            <person name="Perea J."/>
            <person name="Perez-Alonso M."/>
            <person name="Perez-Ortin J.E."/>
            <person name="Pohl T.M."/>
            <person name="Prydz H."/>
            <person name="Purnelle B."/>
            <person name="Rasmussen S.W."/>
            <person name="Remacha M.A."/>
            <person name="Revuelta J.L."/>
            <person name="Rieger M."/>
            <person name="Salom D."/>
            <person name="Saluz H.P."/>
            <person name="Saiz J.E."/>
            <person name="Saren A.-M."/>
            <person name="Schaefer M."/>
            <person name="Scharfe M."/>
            <person name="Schmidt E.R."/>
            <person name="Schneider C."/>
            <person name="Scholler P."/>
            <person name="Schwarz S."/>
            <person name="Soler-Mira A."/>
            <person name="Urrestarazu L.A."/>
            <person name="Verhasselt P."/>
            <person name="Vissers S."/>
            <person name="Voet M."/>
            <person name="Volckaert G."/>
            <person name="Wagner G."/>
            <person name="Wambutt R."/>
            <person name="Wedler E."/>
            <person name="Wedler H."/>
            <person name="Woelfl S."/>
            <person name="Harris D.E."/>
            <person name="Bowman S."/>
            <person name="Brown D."/>
            <person name="Churcher C.M."/>
            <person name="Connor R."/>
            <person name="Dedman K."/>
            <person name="Gentles S."/>
            <person name="Hamlin N."/>
            <person name="Hunt S."/>
            <person name="Jones L."/>
            <person name="McDonald S."/>
            <person name="Murphy L.D."/>
            <person name="Niblett D."/>
            <person name="Odell C."/>
            <person name="Oliver K."/>
            <person name="Rajandream M.A."/>
            <person name="Richards C."/>
            <person name="Shore L."/>
            <person name="Walsh S.V."/>
            <person name="Barrell B.G."/>
            <person name="Dietrich F.S."/>
            <person name="Mulligan J.T."/>
            <person name="Allen E."/>
            <person name="Araujo R."/>
            <person name="Aviles E."/>
            <person name="Berno A."/>
            <person name="Carpenter J."/>
            <person name="Chen E."/>
            <person name="Cherry J.M."/>
            <person name="Chung E."/>
            <person name="Duncan M."/>
            <person name="Hunicke-Smith S."/>
            <person name="Hyman R.W."/>
            <person name="Komp C."/>
            <person name="Lashkari D."/>
            <person name="Lew H."/>
            <person name="Lin D."/>
            <person name="Mosedale D."/>
            <person name="Nakahara K."/>
            <person name="Namath A."/>
            <person name="Oefner P."/>
            <person name="Oh C."/>
            <person name="Petel F.X."/>
            <person name="Roberts D."/>
            <person name="Schramm S."/>
            <person name="Schroeder M."/>
            <person name="Shogren T."/>
            <person name="Shroff N."/>
            <person name="Winant A."/>
            <person name="Yelton M.A."/>
            <person name="Botstein D."/>
            <person name="Davis R.W."/>
            <person name="Johnston M."/>
            <person name="Andrews S."/>
            <person name="Brinkman R."/>
            <person name="Cooper J."/>
            <person name="Ding H."/>
            <person name="Du Z."/>
            <person name="Favello A."/>
            <person name="Fulton L."/>
            <person name="Gattung S."/>
            <person name="Greco T."/>
            <person name="Hallsworth K."/>
            <person name="Hawkins J."/>
            <person name="Hillier L.W."/>
            <person name="Jier M."/>
            <person name="Johnson D."/>
            <person name="Johnston L."/>
            <person name="Kirsten J."/>
            <person name="Kucaba T."/>
            <person name="Langston Y."/>
            <person name="Latreille P."/>
            <person name="Le T."/>
            <person name="Mardis E."/>
            <person name="Menezes S."/>
            <person name="Miller N."/>
            <person name="Nhan M."/>
            <person name="Pauley A."/>
            <person name="Peluso D."/>
            <person name="Rifkin L."/>
            <person name="Riles L."/>
            <person name="Taich A."/>
            <person name="Trevaskis E."/>
            <person name="Vignati D."/>
            <person name="Wilcox L."/>
            <person name="Wohldman P."/>
            <person name="Vaudin M."/>
            <person name="Wilson R."/>
            <person name="Waterston R."/>
            <person name="Albermann K."/>
            <person name="Hani J."/>
            <person name="Heumann K."/>
            <person name="Kleine K."/>
            <person name="Mewes H.-W."/>
            <person name="Zollner A."/>
            <person name="Zaccaria P."/>
        </authorList>
    </citation>
    <scope>NUCLEOTIDE SEQUENCE [LARGE SCALE GENOMIC DNA]</scope>
    <source>
        <strain>ATCC 204508 / S288c</strain>
    </source>
</reference>
<reference key="2">
    <citation type="journal article" date="2014" name="G3 (Bethesda)">
        <title>The reference genome sequence of Saccharomyces cerevisiae: Then and now.</title>
        <authorList>
            <person name="Engel S.R."/>
            <person name="Dietrich F.S."/>
            <person name="Fisk D.G."/>
            <person name="Binkley G."/>
            <person name="Balakrishnan R."/>
            <person name="Costanzo M.C."/>
            <person name="Dwight S.S."/>
            <person name="Hitz B.C."/>
            <person name="Karra K."/>
            <person name="Nash R.S."/>
            <person name="Weng S."/>
            <person name="Wong E.D."/>
            <person name="Lloyd P."/>
            <person name="Skrzypek M.S."/>
            <person name="Miyasato S.R."/>
            <person name="Simison M."/>
            <person name="Cherry J.M."/>
        </authorList>
    </citation>
    <scope>GENOME REANNOTATION</scope>
    <source>
        <strain>ATCC 204508 / S288c</strain>
    </source>
</reference>
<reference key="3">
    <citation type="journal article" date="1996" name="Microbiology">
        <title>SPR28, a sixth member of the septin gene family in Saccharomyces cerevisiae that is expressed specifically in sporulating cells.</title>
        <authorList>
            <person name="de Virgilio C."/>
            <person name="DeMarini D.J."/>
            <person name="Pringle J.R."/>
        </authorList>
    </citation>
    <scope>SUBCELLULAR LOCATION</scope>
    <scope>DEVELOPMENTAL STAGE</scope>
    <scope>INTERACTION WITH CDC11 AND SPR3</scope>
</reference>
<dbReference type="EMBL" id="Z48612">
    <property type="protein sequence ID" value="CAA88498.1"/>
    <property type="molecule type" value="Genomic_DNA"/>
</dbReference>
<dbReference type="EMBL" id="BK006938">
    <property type="protein sequence ID" value="DAA12061.1"/>
    <property type="molecule type" value="Genomic_DNA"/>
</dbReference>
<dbReference type="PIR" id="S59425">
    <property type="entry name" value="S59425"/>
</dbReference>
<dbReference type="RefSeq" id="NP_010504.1">
    <property type="nucleotide sequence ID" value="NM_001180526.1"/>
</dbReference>
<dbReference type="SMR" id="Q04921"/>
<dbReference type="BioGRID" id="32271">
    <property type="interactions" value="56"/>
</dbReference>
<dbReference type="DIP" id="DIP-943N"/>
<dbReference type="FunCoup" id="Q04921">
    <property type="interactions" value="34"/>
</dbReference>
<dbReference type="IntAct" id="Q04921">
    <property type="interactions" value="2"/>
</dbReference>
<dbReference type="MINT" id="Q04921"/>
<dbReference type="STRING" id="4932.YDR218C"/>
<dbReference type="PaxDb" id="4932-YDR218C"/>
<dbReference type="PeptideAtlas" id="Q04921"/>
<dbReference type="EnsemblFungi" id="YDR218C_mRNA">
    <property type="protein sequence ID" value="YDR218C"/>
    <property type="gene ID" value="YDR218C"/>
</dbReference>
<dbReference type="GeneID" id="851804"/>
<dbReference type="KEGG" id="sce:YDR218C"/>
<dbReference type="AGR" id="SGD:S000002626"/>
<dbReference type="SGD" id="S000002626">
    <property type="gene designation" value="SPR28"/>
</dbReference>
<dbReference type="VEuPathDB" id="FungiDB:YDR218C"/>
<dbReference type="eggNOG" id="KOG2655">
    <property type="taxonomic scope" value="Eukaryota"/>
</dbReference>
<dbReference type="HOGENOM" id="CLU_017718_7_4_1"/>
<dbReference type="InParanoid" id="Q04921"/>
<dbReference type="OMA" id="KRGIQFC"/>
<dbReference type="OrthoDB" id="416553at2759"/>
<dbReference type="BioCyc" id="YEAST:G3O-29799-MONOMER"/>
<dbReference type="BioGRID-ORCS" id="851804">
    <property type="hits" value="1 hit in 10 CRISPR screens"/>
</dbReference>
<dbReference type="PRO" id="PR:Q04921"/>
<dbReference type="Proteomes" id="UP000002311">
    <property type="component" value="Chromosome IV"/>
</dbReference>
<dbReference type="RNAct" id="Q04921">
    <property type="molecule type" value="protein"/>
</dbReference>
<dbReference type="GO" id="GO:0005619">
    <property type="term" value="C:ascospore wall"/>
    <property type="evidence" value="ECO:0000314"/>
    <property type="project" value="SGD"/>
</dbReference>
<dbReference type="GO" id="GO:0032153">
    <property type="term" value="C:cell division site"/>
    <property type="evidence" value="ECO:0000318"/>
    <property type="project" value="GO_Central"/>
</dbReference>
<dbReference type="GO" id="GO:0005935">
    <property type="term" value="C:cellular bud neck"/>
    <property type="evidence" value="ECO:0007669"/>
    <property type="project" value="UniProtKB-SubCell"/>
</dbReference>
<dbReference type="GO" id="GO:0005829">
    <property type="term" value="C:cytosol"/>
    <property type="evidence" value="ECO:0007005"/>
    <property type="project" value="SGD"/>
</dbReference>
<dbReference type="GO" id="GO:0072687">
    <property type="term" value="C:meiotic spindle"/>
    <property type="evidence" value="ECO:0000314"/>
    <property type="project" value="SGD"/>
</dbReference>
<dbReference type="GO" id="GO:0015630">
    <property type="term" value="C:microtubule cytoskeleton"/>
    <property type="evidence" value="ECO:0000318"/>
    <property type="project" value="GO_Central"/>
</dbReference>
<dbReference type="GO" id="GO:0005628">
    <property type="term" value="C:prospore membrane"/>
    <property type="evidence" value="ECO:0000314"/>
    <property type="project" value="SGD"/>
</dbReference>
<dbReference type="GO" id="GO:0031105">
    <property type="term" value="C:septin complex"/>
    <property type="evidence" value="ECO:0000314"/>
    <property type="project" value="SGD"/>
</dbReference>
<dbReference type="GO" id="GO:0005940">
    <property type="term" value="C:septin ring"/>
    <property type="evidence" value="ECO:0000318"/>
    <property type="project" value="GO_Central"/>
</dbReference>
<dbReference type="GO" id="GO:0005876">
    <property type="term" value="C:spindle microtubule"/>
    <property type="evidence" value="ECO:0000314"/>
    <property type="project" value="SGD"/>
</dbReference>
<dbReference type="GO" id="GO:0005525">
    <property type="term" value="F:GTP binding"/>
    <property type="evidence" value="ECO:0007669"/>
    <property type="project" value="UniProtKB-KW"/>
</dbReference>
<dbReference type="GO" id="GO:0003924">
    <property type="term" value="F:GTPase activity"/>
    <property type="evidence" value="ECO:0000318"/>
    <property type="project" value="GO_Central"/>
</dbReference>
<dbReference type="GO" id="GO:0060090">
    <property type="term" value="F:molecular adaptor activity"/>
    <property type="evidence" value="ECO:0000318"/>
    <property type="project" value="GO_Central"/>
</dbReference>
<dbReference type="GO" id="GO:0005198">
    <property type="term" value="F:structural molecule activity"/>
    <property type="evidence" value="ECO:0000250"/>
    <property type="project" value="SGD"/>
</dbReference>
<dbReference type="GO" id="GO:0000915">
    <property type="term" value="P:actomyosin contractile ring assembly"/>
    <property type="evidence" value="ECO:0000318"/>
    <property type="project" value="GO_Central"/>
</dbReference>
<dbReference type="GO" id="GO:0030437">
    <property type="term" value="P:ascospore formation"/>
    <property type="evidence" value="ECO:0000315"/>
    <property type="project" value="SGD"/>
</dbReference>
<dbReference type="GO" id="GO:0032186">
    <property type="term" value="P:cellular bud neck septin ring organization"/>
    <property type="evidence" value="ECO:0000318"/>
    <property type="project" value="GO_Central"/>
</dbReference>
<dbReference type="GO" id="GO:0061640">
    <property type="term" value="P:cytoskeleton-dependent cytokinesis"/>
    <property type="evidence" value="ECO:0000318"/>
    <property type="project" value="GO_Central"/>
</dbReference>
<dbReference type="GO" id="GO:0000917">
    <property type="term" value="P:division septum assembly"/>
    <property type="evidence" value="ECO:0000318"/>
    <property type="project" value="GO_Central"/>
</dbReference>
<dbReference type="GO" id="GO:0097271">
    <property type="term" value="P:protein localization to bud neck"/>
    <property type="evidence" value="ECO:0000318"/>
    <property type="project" value="GO_Central"/>
</dbReference>
<dbReference type="CDD" id="cd01850">
    <property type="entry name" value="CDC_Septin"/>
    <property type="match status" value="1"/>
</dbReference>
<dbReference type="FunFam" id="3.40.50.300:FF:001631">
    <property type="entry name" value="Shs1p"/>
    <property type="match status" value="1"/>
</dbReference>
<dbReference type="Gene3D" id="3.40.50.300">
    <property type="entry name" value="P-loop containing nucleotide triphosphate hydrolases"/>
    <property type="match status" value="1"/>
</dbReference>
<dbReference type="InterPro" id="IPR030379">
    <property type="entry name" value="G_SEPTIN_dom"/>
</dbReference>
<dbReference type="InterPro" id="IPR027417">
    <property type="entry name" value="P-loop_NTPase"/>
</dbReference>
<dbReference type="InterPro" id="IPR016491">
    <property type="entry name" value="Septin"/>
</dbReference>
<dbReference type="PANTHER" id="PTHR18884">
    <property type="entry name" value="SEPTIN"/>
    <property type="match status" value="1"/>
</dbReference>
<dbReference type="Pfam" id="PF00735">
    <property type="entry name" value="Septin"/>
    <property type="match status" value="1"/>
</dbReference>
<dbReference type="PIRSF" id="PIRSF006698">
    <property type="entry name" value="Septin"/>
    <property type="match status" value="1"/>
</dbReference>
<dbReference type="SUPFAM" id="SSF52540">
    <property type="entry name" value="P-loop containing nucleoside triphosphate hydrolases"/>
    <property type="match status" value="1"/>
</dbReference>
<dbReference type="PROSITE" id="PS51719">
    <property type="entry name" value="G_SEPTIN"/>
    <property type="match status" value="1"/>
</dbReference>
<proteinExistence type="evidence at protein level"/>
<keyword id="KW-0131">Cell cycle</keyword>
<keyword id="KW-0132">Cell division</keyword>
<keyword id="KW-0175">Coiled coil</keyword>
<keyword id="KW-0342">GTP-binding</keyword>
<keyword id="KW-0472">Membrane</keyword>
<keyword id="KW-0547">Nucleotide-binding</keyword>
<keyword id="KW-1185">Reference proteome</keyword>
<sequence length="423" mass="48193">MFPMKDHSALEQHTLSRDELRRRKGYKKGLQLSILLLGEKGSGKSTFLNNLCGQDISLSDGDYDDDDDKVTNNVTPENGNAIEDIDPGYKTAHLSPGLKLVTRRVYLNDELGVPITLDIILFPGCGDNVDNSQSSVVIKNYLDQQFANVLKEEVRIKRNTKETDGRPHVCLYFLKSTPRGVKKFDIELMKTICDKVNLIPIIPKADGLTETELNLHKDIVRQEISQNNIRVFDFKSDTLGETLALYDMDIDSSSAKSKYDNDTKIKEISPFAIVCSKTFNKNSENRVEHIRTYEWGSLVVEDQNTSDFIYLKAILLGSHLQELKDVTNNVLYENYRAKVLTEKKNNYDIPNYSYIDETSRGSVSNVSTRRNSASRTLGNPDTNDENAYQIHKEIDEKNRIIEDYQRKIDLLEKMLAAPHQNKV</sequence>
<feature type="chain" id="PRO_0000173501" description="Sporulation-regulated protein 28">
    <location>
        <begin position="1"/>
        <end position="423"/>
    </location>
</feature>
<feature type="domain" description="Septin-type G" evidence="3">
    <location>
        <begin position="28"/>
        <end position="342"/>
    </location>
</feature>
<feature type="region of interest" description="G1 motif" evidence="3">
    <location>
        <begin position="38"/>
        <end position="45"/>
    </location>
</feature>
<feature type="region of interest" description="G3 motif" evidence="3">
    <location>
        <begin position="121"/>
        <end position="124"/>
    </location>
</feature>
<feature type="region of interest" description="G4 motif" evidence="3">
    <location>
        <begin position="203"/>
        <end position="206"/>
    </location>
</feature>
<feature type="region of interest" description="Disordered" evidence="4">
    <location>
        <begin position="360"/>
        <end position="385"/>
    </location>
</feature>
<feature type="coiled-coil region" evidence="2">
    <location>
        <begin position="384"/>
        <end position="417"/>
    </location>
</feature>
<feature type="compositionally biased region" description="Polar residues" evidence="4">
    <location>
        <begin position="360"/>
        <end position="381"/>
    </location>
</feature>
<feature type="binding site" evidence="1">
    <location>
        <begin position="38"/>
        <end position="45"/>
    </location>
    <ligand>
        <name>GTP</name>
        <dbReference type="ChEBI" id="CHEBI:37565"/>
    </ligand>
</feature>
<feature type="binding site" evidence="1">
    <location>
        <position position="124"/>
    </location>
    <ligand>
        <name>GTP</name>
        <dbReference type="ChEBI" id="CHEBI:37565"/>
    </ligand>
</feature>
<feature type="binding site" evidence="1">
    <location>
        <begin position="204"/>
        <end position="212"/>
    </location>
    <ligand>
        <name>GTP</name>
        <dbReference type="ChEBI" id="CHEBI:37565"/>
    </ligand>
</feature>
<feature type="binding site" evidence="1">
    <location>
        <position position="291"/>
    </location>
    <ligand>
        <name>GTP</name>
        <dbReference type="ChEBI" id="CHEBI:37565"/>
    </ligand>
</feature>
<accession>Q04921</accession>
<accession>D6VSK1</accession>
<name>SPR28_YEAST</name>